<keyword id="KW-1015">Disulfide bond</keyword>
<keyword id="KW-0325">Glycoprotein</keyword>
<keyword id="KW-0372">Hormone</keyword>
<keyword id="KW-1185">Reference proteome</keyword>
<keyword id="KW-0964">Secreted</keyword>
<keyword id="KW-0732">Signal</keyword>
<protein>
    <recommendedName>
        <fullName>Protein RALF-like 35</fullName>
    </recommendedName>
</protein>
<gene>
    <name type="ordered locus">At1g60913</name>
    <name type="ORF">T7P1</name>
</gene>
<comment type="function">
    <text evidence="1">Cell signaling peptide that may regulate plant stress, growth, and development. Mediates a rapid alkalinization of extracellular space by mediating a transient increase in the cytoplasmic Ca(2+) concentration leading to a calcium-dependent signaling events through a cell surface receptor and a concomitant activation of some intracellular mitogen-activated protein kinases (By similarity).</text>
</comment>
<comment type="subcellular location">
    <subcellularLocation>
        <location evidence="1">Secreted</location>
    </subcellularLocation>
</comment>
<comment type="similarity">
    <text evidence="3">Belongs to the plant rapid alkalinization factor (RALF) family.</text>
</comment>
<evidence type="ECO:0000250" key="1"/>
<evidence type="ECO:0000255" key="2"/>
<evidence type="ECO:0000305" key="3"/>
<sequence length="79" mass="9062">MAAHKMSLTSLFFVSIVIVLSLFSGFGEGRYIKYRAIAKDRVPDCTQDPKNCVRVPVNQYHLPPGCQNTTHCYREKYHI</sequence>
<organism>
    <name type="scientific">Arabidopsis thaliana</name>
    <name type="common">Mouse-ear cress</name>
    <dbReference type="NCBI Taxonomy" id="3702"/>
    <lineage>
        <taxon>Eukaryota</taxon>
        <taxon>Viridiplantae</taxon>
        <taxon>Streptophyta</taxon>
        <taxon>Embryophyta</taxon>
        <taxon>Tracheophyta</taxon>
        <taxon>Spermatophyta</taxon>
        <taxon>Magnoliopsida</taxon>
        <taxon>eudicotyledons</taxon>
        <taxon>Gunneridae</taxon>
        <taxon>Pentapetalae</taxon>
        <taxon>rosids</taxon>
        <taxon>malvids</taxon>
        <taxon>Brassicales</taxon>
        <taxon>Brassicaceae</taxon>
        <taxon>Camelineae</taxon>
        <taxon>Arabidopsis</taxon>
    </lineage>
</organism>
<reference key="1">
    <citation type="journal article" date="2000" name="Nature">
        <title>Sequence and analysis of chromosome 1 of the plant Arabidopsis thaliana.</title>
        <authorList>
            <person name="Theologis A."/>
            <person name="Ecker J.R."/>
            <person name="Palm C.J."/>
            <person name="Federspiel N.A."/>
            <person name="Kaul S."/>
            <person name="White O."/>
            <person name="Alonso J."/>
            <person name="Altafi H."/>
            <person name="Araujo R."/>
            <person name="Bowman C.L."/>
            <person name="Brooks S.Y."/>
            <person name="Buehler E."/>
            <person name="Chan A."/>
            <person name="Chao Q."/>
            <person name="Chen H."/>
            <person name="Cheuk R.F."/>
            <person name="Chin C.W."/>
            <person name="Chung M.K."/>
            <person name="Conn L."/>
            <person name="Conway A.B."/>
            <person name="Conway A.R."/>
            <person name="Creasy T.H."/>
            <person name="Dewar K."/>
            <person name="Dunn P."/>
            <person name="Etgu P."/>
            <person name="Feldblyum T.V."/>
            <person name="Feng J.-D."/>
            <person name="Fong B."/>
            <person name="Fujii C.Y."/>
            <person name="Gill J.E."/>
            <person name="Goldsmith A.D."/>
            <person name="Haas B."/>
            <person name="Hansen N.F."/>
            <person name="Hughes B."/>
            <person name="Huizar L."/>
            <person name="Hunter J.L."/>
            <person name="Jenkins J."/>
            <person name="Johnson-Hopson C."/>
            <person name="Khan S."/>
            <person name="Khaykin E."/>
            <person name="Kim C.J."/>
            <person name="Koo H.L."/>
            <person name="Kremenetskaia I."/>
            <person name="Kurtz D.B."/>
            <person name="Kwan A."/>
            <person name="Lam B."/>
            <person name="Langin-Hooper S."/>
            <person name="Lee A."/>
            <person name="Lee J.M."/>
            <person name="Lenz C.A."/>
            <person name="Li J.H."/>
            <person name="Li Y.-P."/>
            <person name="Lin X."/>
            <person name="Liu S.X."/>
            <person name="Liu Z.A."/>
            <person name="Luros J.S."/>
            <person name="Maiti R."/>
            <person name="Marziali A."/>
            <person name="Militscher J."/>
            <person name="Miranda M."/>
            <person name="Nguyen M."/>
            <person name="Nierman W.C."/>
            <person name="Osborne B.I."/>
            <person name="Pai G."/>
            <person name="Peterson J."/>
            <person name="Pham P.K."/>
            <person name="Rizzo M."/>
            <person name="Rooney T."/>
            <person name="Rowley D."/>
            <person name="Sakano H."/>
            <person name="Salzberg S.L."/>
            <person name="Schwartz J.R."/>
            <person name="Shinn P."/>
            <person name="Southwick A.M."/>
            <person name="Sun H."/>
            <person name="Tallon L.J."/>
            <person name="Tambunga G."/>
            <person name="Toriumi M.J."/>
            <person name="Town C.D."/>
            <person name="Utterback T."/>
            <person name="Van Aken S."/>
            <person name="Vaysberg M."/>
            <person name="Vysotskaia V.S."/>
            <person name="Walker M."/>
            <person name="Wu D."/>
            <person name="Yu G."/>
            <person name="Fraser C.M."/>
            <person name="Venter J.C."/>
            <person name="Davis R.W."/>
        </authorList>
    </citation>
    <scope>NUCLEOTIDE SEQUENCE [LARGE SCALE GENOMIC DNA]</scope>
    <source>
        <strain>cv. Columbia</strain>
    </source>
</reference>
<reference key="2">
    <citation type="journal article" date="2017" name="Plant J.">
        <title>Araport11: a complete reannotation of the Arabidopsis thaliana reference genome.</title>
        <authorList>
            <person name="Cheng C.Y."/>
            <person name="Krishnakumar V."/>
            <person name="Chan A.P."/>
            <person name="Thibaud-Nissen F."/>
            <person name="Schobel S."/>
            <person name="Town C.D."/>
        </authorList>
    </citation>
    <scope>GENOME REANNOTATION</scope>
    <source>
        <strain>cv. Columbia</strain>
    </source>
</reference>
<name>RLF35_ARATH</name>
<dbReference type="EMBL" id="AC018908">
    <property type="status" value="NOT_ANNOTATED_CDS"/>
    <property type="molecule type" value="Genomic_DNA"/>
</dbReference>
<dbReference type="EMBL" id="CP002684">
    <property type="protein sequence ID" value="AEE33747.1"/>
    <property type="molecule type" value="Genomic_DNA"/>
</dbReference>
<dbReference type="RefSeq" id="NP_001077747.1">
    <property type="nucleotide sequence ID" value="NM_001084278.2"/>
</dbReference>
<dbReference type="SMR" id="A8MRK3"/>
<dbReference type="STRING" id="3702.A8MRK3"/>
<dbReference type="GlyGen" id="A8MRK3">
    <property type="glycosylation" value="1 site"/>
</dbReference>
<dbReference type="PaxDb" id="3702-AT1G60913.1"/>
<dbReference type="EnsemblPlants" id="AT1G60913.1">
    <property type="protein sequence ID" value="AT1G60913.1"/>
    <property type="gene ID" value="AT1G60913"/>
</dbReference>
<dbReference type="GeneID" id="5007824"/>
<dbReference type="Gramene" id="AT1G60913.1">
    <property type="protein sequence ID" value="AT1G60913.1"/>
    <property type="gene ID" value="AT1G60913"/>
</dbReference>
<dbReference type="KEGG" id="ath:AT1G60913"/>
<dbReference type="Araport" id="AT1G60913"/>
<dbReference type="TAIR" id="AT1G60913"/>
<dbReference type="HOGENOM" id="CLU_184731_0_0_1"/>
<dbReference type="InParanoid" id="A8MRK3"/>
<dbReference type="OMA" id="THCYREK"/>
<dbReference type="OrthoDB" id="1021847at2759"/>
<dbReference type="PhylomeDB" id="A8MRK3"/>
<dbReference type="PRO" id="PR:A8MRK3"/>
<dbReference type="Proteomes" id="UP000006548">
    <property type="component" value="Chromosome 1"/>
</dbReference>
<dbReference type="ExpressionAtlas" id="A8MRK3">
    <property type="expression patterns" value="baseline and differential"/>
</dbReference>
<dbReference type="GO" id="GO:0005576">
    <property type="term" value="C:extracellular region"/>
    <property type="evidence" value="ECO:0007669"/>
    <property type="project" value="UniProtKB-SubCell"/>
</dbReference>
<dbReference type="GO" id="GO:0005179">
    <property type="term" value="F:hormone activity"/>
    <property type="evidence" value="ECO:0000250"/>
    <property type="project" value="UniProtKB"/>
</dbReference>
<dbReference type="GO" id="GO:0019722">
    <property type="term" value="P:calcium-mediated signaling"/>
    <property type="evidence" value="ECO:0000250"/>
    <property type="project" value="UniProtKB"/>
</dbReference>
<dbReference type="GO" id="GO:0040008">
    <property type="term" value="P:regulation of growth"/>
    <property type="evidence" value="ECO:0007669"/>
    <property type="project" value="UniProtKB-ARBA"/>
</dbReference>
<dbReference type="InterPro" id="IPR008801">
    <property type="entry name" value="RALF"/>
</dbReference>
<dbReference type="PANTHER" id="PTHR34270">
    <property type="entry name" value="PROTEIN RALF-LIKE 15-RELATED"/>
    <property type="match status" value="1"/>
</dbReference>
<dbReference type="PANTHER" id="PTHR34270:SF3">
    <property type="entry name" value="PROTEIN RALF-LIKE 16-RELATED"/>
    <property type="match status" value="1"/>
</dbReference>
<dbReference type="Pfam" id="PF05498">
    <property type="entry name" value="RALF"/>
    <property type="match status" value="1"/>
</dbReference>
<proteinExistence type="inferred from homology"/>
<feature type="signal peptide" evidence="2">
    <location>
        <begin position="1"/>
        <end position="29"/>
    </location>
</feature>
<feature type="chain" id="PRO_0000420337" description="Protein RALF-like 35">
    <location>
        <begin position="30"/>
        <end position="79"/>
    </location>
</feature>
<feature type="glycosylation site" description="N-linked (GlcNAc...) asparagine" evidence="2">
    <location>
        <position position="68"/>
    </location>
</feature>
<feature type="disulfide bond" evidence="1">
    <location>
        <begin position="45"/>
        <end position="52"/>
    </location>
</feature>
<feature type="disulfide bond" evidence="1">
    <location>
        <begin position="66"/>
        <end position="72"/>
    </location>
</feature>
<accession>A8MRK3</accession>